<gene>
    <name type="primary">TBP1</name>
</gene>
<evidence type="ECO:0000305" key="1"/>
<accession>Q42808</accession>
<name>TBP_SOYBN</name>
<protein>
    <recommendedName>
        <fullName>TATA-box-binding protein</fullName>
    </recommendedName>
    <alternativeName>
        <fullName>TATA sequence-binding protein</fullName>
        <shortName>TBP</shortName>
    </alternativeName>
    <alternativeName>
        <fullName>TATA-binding factor</fullName>
    </alternativeName>
    <alternativeName>
        <fullName>TATA-box factor</fullName>
    </alternativeName>
    <alternativeName>
        <fullName>Transcription initiation factor TFIID TBP subunit</fullName>
    </alternativeName>
</protein>
<dbReference type="EMBL" id="L28002">
    <property type="protein sequence ID" value="AAA91948.1"/>
    <property type="molecule type" value="mRNA"/>
</dbReference>
<dbReference type="RefSeq" id="NP_001238202.1">
    <property type="nucleotide sequence ID" value="NM_001251273.1"/>
</dbReference>
<dbReference type="RefSeq" id="NP_001242795.1">
    <property type="nucleotide sequence ID" value="NM_001255866.2"/>
</dbReference>
<dbReference type="RefSeq" id="XP_006598769.2">
    <property type="nucleotide sequence ID" value="XM_006598706.4"/>
</dbReference>
<dbReference type="SMR" id="Q42808"/>
<dbReference type="FunCoup" id="Q42808">
    <property type="interactions" value="7223"/>
</dbReference>
<dbReference type="STRING" id="3847.Q42808"/>
<dbReference type="PaxDb" id="3847-GLYMA03G04500.1"/>
<dbReference type="EnsemblPlants" id="KRH08284">
    <property type="protein sequence ID" value="KRH08284"/>
    <property type="gene ID" value="GLYMA_16G140200"/>
</dbReference>
<dbReference type="EnsemblPlants" id="KRH08285">
    <property type="protein sequence ID" value="KRH08285"/>
    <property type="gene ID" value="GLYMA_16G140200"/>
</dbReference>
<dbReference type="EnsemblPlants" id="KRH08286">
    <property type="protein sequence ID" value="KRH08286"/>
    <property type="gene ID" value="GLYMA_16G140200"/>
</dbReference>
<dbReference type="EnsemblPlants" id="KRH65450">
    <property type="protein sequence ID" value="KRH65450"/>
    <property type="gene ID" value="GLYMA_03G036800"/>
</dbReference>
<dbReference type="EnsemblPlants" id="KRH65451">
    <property type="protein sequence ID" value="KRH65451"/>
    <property type="gene ID" value="GLYMA_03G036800"/>
</dbReference>
<dbReference type="GeneID" id="547805"/>
<dbReference type="Gramene" id="KRH08284">
    <property type="protein sequence ID" value="KRH08284"/>
    <property type="gene ID" value="GLYMA_16G140200"/>
</dbReference>
<dbReference type="Gramene" id="KRH08285">
    <property type="protein sequence ID" value="KRH08285"/>
    <property type="gene ID" value="GLYMA_16G140200"/>
</dbReference>
<dbReference type="Gramene" id="KRH08286">
    <property type="protein sequence ID" value="KRH08286"/>
    <property type="gene ID" value="GLYMA_16G140200"/>
</dbReference>
<dbReference type="Gramene" id="KRH65450">
    <property type="protein sequence ID" value="KRH65450"/>
    <property type="gene ID" value="GLYMA_03G036800"/>
</dbReference>
<dbReference type="Gramene" id="KRH65451">
    <property type="protein sequence ID" value="KRH65451"/>
    <property type="gene ID" value="GLYMA_03G036800"/>
</dbReference>
<dbReference type="KEGG" id="gmx:100810213"/>
<dbReference type="KEGG" id="gmx:547805"/>
<dbReference type="eggNOG" id="KOG3302">
    <property type="taxonomic scope" value="Eukaryota"/>
</dbReference>
<dbReference type="HOGENOM" id="CLU_060161_4_2_1"/>
<dbReference type="InParanoid" id="Q42808"/>
<dbReference type="OMA" id="YTTATIW"/>
<dbReference type="OrthoDB" id="2127950at2759"/>
<dbReference type="Proteomes" id="UP000008827">
    <property type="component" value="Chromosome 16"/>
</dbReference>
<dbReference type="Proteomes" id="UP000008827">
    <property type="component" value="Chromosome 3"/>
</dbReference>
<dbReference type="GO" id="GO:0005634">
    <property type="term" value="C:nucleus"/>
    <property type="evidence" value="ECO:0007669"/>
    <property type="project" value="UniProtKB-SubCell"/>
</dbReference>
<dbReference type="GO" id="GO:0003677">
    <property type="term" value="F:DNA binding"/>
    <property type="evidence" value="ECO:0007669"/>
    <property type="project" value="UniProtKB-KW"/>
</dbReference>
<dbReference type="GO" id="GO:0016251">
    <property type="term" value="F:RNA polymerase II general transcription initiation factor activity"/>
    <property type="evidence" value="ECO:0000318"/>
    <property type="project" value="GO_Central"/>
</dbReference>
<dbReference type="GO" id="GO:0006352">
    <property type="term" value="P:DNA-templated transcription initiation"/>
    <property type="evidence" value="ECO:0000318"/>
    <property type="project" value="GO_Central"/>
</dbReference>
<dbReference type="CDD" id="cd04516">
    <property type="entry name" value="TBP_eukaryotes"/>
    <property type="match status" value="1"/>
</dbReference>
<dbReference type="FunFam" id="3.30.310.10:FF:000001">
    <property type="entry name" value="TATA-box-binding protein 2"/>
    <property type="match status" value="1"/>
</dbReference>
<dbReference type="FunFam" id="3.30.310.10:FF:000002">
    <property type="entry name" value="TATA-box-binding protein 2"/>
    <property type="match status" value="1"/>
</dbReference>
<dbReference type="Gene3D" id="3.30.310.10">
    <property type="entry name" value="TATA-Binding Protein"/>
    <property type="match status" value="2"/>
</dbReference>
<dbReference type="HAMAP" id="MF_00408">
    <property type="entry name" value="TATA_bind_prot_arch"/>
    <property type="match status" value="1"/>
</dbReference>
<dbReference type="InterPro" id="IPR000814">
    <property type="entry name" value="TBP"/>
</dbReference>
<dbReference type="InterPro" id="IPR030491">
    <property type="entry name" value="TBP_CS"/>
</dbReference>
<dbReference type="InterPro" id="IPR012295">
    <property type="entry name" value="TBP_dom_sf"/>
</dbReference>
<dbReference type="InterPro" id="IPR033710">
    <property type="entry name" value="TBP_eukaryotic"/>
</dbReference>
<dbReference type="PANTHER" id="PTHR10126">
    <property type="entry name" value="TATA-BOX BINDING PROTEIN"/>
    <property type="match status" value="1"/>
</dbReference>
<dbReference type="Pfam" id="PF00352">
    <property type="entry name" value="TBP"/>
    <property type="match status" value="2"/>
</dbReference>
<dbReference type="PRINTS" id="PR00686">
    <property type="entry name" value="TIFACTORIID"/>
</dbReference>
<dbReference type="SUPFAM" id="SSF55945">
    <property type="entry name" value="TATA-box binding protein-like"/>
    <property type="match status" value="2"/>
</dbReference>
<dbReference type="PROSITE" id="PS00351">
    <property type="entry name" value="TFIID"/>
    <property type="match status" value="2"/>
</dbReference>
<comment type="function">
    <text>General transcription factor that functions at the core of the DNA-binding multiprotein factor TFIID. Binding of TFIID to the TATA box is the initial transcriptional step of the pre-initiation complex (PIC), playing a role in the activation of eukaryotic genes transcribed by RNA polymerase II.</text>
</comment>
<comment type="subunit">
    <text>Belongs to the TFIID complex together with the TBP-associated factors (TAFs). Binds DNA as monomer.</text>
</comment>
<comment type="subcellular location">
    <subcellularLocation>
        <location>Nucleus</location>
    </subcellularLocation>
</comment>
<comment type="similarity">
    <text evidence="1">Belongs to the TBP family.</text>
</comment>
<sequence>MADQGLEGSQPVDLQKHPSGIVPTLQNIVSTVNLDCKLDLKTIALQARNAEYNPKRFAAVIMRIRDPKTTALIFASGKMVCTGAKSEQQSKLAARKYARIIQKLGFPAKFKDFKIQNIVGSCDVKFPIRLEGLAYSHGAFSSYEPELFPGLIYRMKQPKIVLLIFVSGKIVLTGAKVRDETYTAFENIYPVLTEFRKNQQ</sequence>
<reference key="1">
    <citation type="submission" date="1996-03" db="EMBL/GenBank/DDBJ databases">
        <authorList>
            <person name="Park J.M."/>
            <person name="Cheong Y.H."/>
            <person name="Bahk J.D."/>
            <person name="Cho M.J."/>
            <person name="Hong J.C."/>
        </authorList>
    </citation>
    <scope>NUCLEOTIDE SEQUENCE [MRNA]</scope>
    <source>
        <strain>cv. Hwangkeum</strain>
    </source>
</reference>
<feature type="chain" id="PRO_0000153983" description="TATA-box-binding protein">
    <location>
        <begin position="1"/>
        <end position="200"/>
    </location>
</feature>
<feature type="repeat" description="1">
    <location>
        <begin position="25"/>
        <end position="101"/>
    </location>
</feature>
<feature type="repeat" description="2">
    <location>
        <begin position="115"/>
        <end position="192"/>
    </location>
</feature>
<keyword id="KW-0238">DNA-binding</keyword>
<keyword id="KW-0539">Nucleus</keyword>
<keyword id="KW-1185">Reference proteome</keyword>
<keyword id="KW-0677">Repeat</keyword>
<keyword id="KW-0804">Transcription</keyword>
<organism>
    <name type="scientific">Glycine max</name>
    <name type="common">Soybean</name>
    <name type="synonym">Glycine hispida</name>
    <dbReference type="NCBI Taxonomy" id="3847"/>
    <lineage>
        <taxon>Eukaryota</taxon>
        <taxon>Viridiplantae</taxon>
        <taxon>Streptophyta</taxon>
        <taxon>Embryophyta</taxon>
        <taxon>Tracheophyta</taxon>
        <taxon>Spermatophyta</taxon>
        <taxon>Magnoliopsida</taxon>
        <taxon>eudicotyledons</taxon>
        <taxon>Gunneridae</taxon>
        <taxon>Pentapetalae</taxon>
        <taxon>rosids</taxon>
        <taxon>fabids</taxon>
        <taxon>Fabales</taxon>
        <taxon>Fabaceae</taxon>
        <taxon>Papilionoideae</taxon>
        <taxon>50 kb inversion clade</taxon>
        <taxon>NPAAA clade</taxon>
        <taxon>indigoferoid/millettioid clade</taxon>
        <taxon>Phaseoleae</taxon>
        <taxon>Glycine</taxon>
        <taxon>Glycine subgen. Soja</taxon>
    </lineage>
</organism>
<proteinExistence type="evidence at transcript level"/>